<gene>
    <name evidence="1" type="primary">rlmI</name>
    <name type="ordered locus">EcHS_A1076</name>
</gene>
<comment type="function">
    <text evidence="1">Specifically methylates the cytosine at position 1962 (m5C1962) of 23S rRNA.</text>
</comment>
<comment type="catalytic activity">
    <reaction evidence="1">
        <text>cytidine(1962) in 23S rRNA + S-adenosyl-L-methionine = 5-methylcytidine(1962) in 23S rRNA + S-adenosyl-L-homocysteine + H(+)</text>
        <dbReference type="Rhea" id="RHEA:42912"/>
        <dbReference type="Rhea" id="RHEA-COMP:10382"/>
        <dbReference type="Rhea" id="RHEA-COMP:10386"/>
        <dbReference type="ChEBI" id="CHEBI:15378"/>
        <dbReference type="ChEBI" id="CHEBI:57856"/>
        <dbReference type="ChEBI" id="CHEBI:59789"/>
        <dbReference type="ChEBI" id="CHEBI:74483"/>
        <dbReference type="ChEBI" id="CHEBI:82748"/>
        <dbReference type="EC" id="2.1.1.191"/>
    </reaction>
</comment>
<comment type="subcellular location">
    <subcellularLocation>
        <location evidence="1">Cytoplasm</location>
    </subcellularLocation>
</comment>
<comment type="similarity">
    <text evidence="1">Belongs to the methyltransferase superfamily. RlmI family.</text>
</comment>
<reference key="1">
    <citation type="journal article" date="2008" name="J. Bacteriol.">
        <title>The pangenome structure of Escherichia coli: comparative genomic analysis of E. coli commensal and pathogenic isolates.</title>
        <authorList>
            <person name="Rasko D.A."/>
            <person name="Rosovitz M.J."/>
            <person name="Myers G.S.A."/>
            <person name="Mongodin E.F."/>
            <person name="Fricke W.F."/>
            <person name="Gajer P."/>
            <person name="Crabtree J."/>
            <person name="Sebaihia M."/>
            <person name="Thomson N.R."/>
            <person name="Chaudhuri R."/>
            <person name="Henderson I.R."/>
            <person name="Sperandio V."/>
            <person name="Ravel J."/>
        </authorList>
    </citation>
    <scope>NUCLEOTIDE SEQUENCE [LARGE SCALE GENOMIC DNA]</scope>
    <source>
        <strain>HS</strain>
    </source>
</reference>
<evidence type="ECO:0000255" key="1">
    <source>
        <dbReference type="HAMAP-Rule" id="MF_01857"/>
    </source>
</evidence>
<name>RLMI_ECOHS</name>
<protein>
    <recommendedName>
        <fullName evidence="1">Ribosomal RNA large subunit methyltransferase I</fullName>
        <ecNumber evidence="1">2.1.1.191</ecNumber>
    </recommendedName>
    <alternativeName>
        <fullName evidence="1">23S rRNA m5C1962 methyltransferase</fullName>
    </alternativeName>
    <alternativeName>
        <fullName evidence="1">rRNA (cytosine-C(5)-)-methyltransferase RlmI</fullName>
    </alternativeName>
</protein>
<keyword id="KW-0963">Cytoplasm</keyword>
<keyword id="KW-0489">Methyltransferase</keyword>
<keyword id="KW-0694">RNA-binding</keyword>
<keyword id="KW-0698">rRNA processing</keyword>
<keyword id="KW-0949">S-adenosyl-L-methionine</keyword>
<keyword id="KW-0808">Transferase</keyword>
<organism>
    <name type="scientific">Escherichia coli O9:H4 (strain HS)</name>
    <dbReference type="NCBI Taxonomy" id="331112"/>
    <lineage>
        <taxon>Bacteria</taxon>
        <taxon>Pseudomonadati</taxon>
        <taxon>Pseudomonadota</taxon>
        <taxon>Gammaproteobacteria</taxon>
        <taxon>Enterobacterales</taxon>
        <taxon>Enterobacteriaceae</taxon>
        <taxon>Escherichia</taxon>
    </lineage>
</organism>
<accession>A7ZYR9</accession>
<dbReference type="EC" id="2.1.1.191" evidence="1"/>
<dbReference type="EMBL" id="CP000802">
    <property type="protein sequence ID" value="ABV05423.1"/>
    <property type="molecule type" value="Genomic_DNA"/>
</dbReference>
<dbReference type="RefSeq" id="WP_000116297.1">
    <property type="nucleotide sequence ID" value="NC_009800.1"/>
</dbReference>
<dbReference type="SMR" id="A7ZYR9"/>
<dbReference type="KEGG" id="ecx:EcHS_A1076"/>
<dbReference type="HOGENOM" id="CLU_014042_0_0_6"/>
<dbReference type="GO" id="GO:0005737">
    <property type="term" value="C:cytoplasm"/>
    <property type="evidence" value="ECO:0007669"/>
    <property type="project" value="UniProtKB-SubCell"/>
</dbReference>
<dbReference type="GO" id="GO:0003723">
    <property type="term" value="F:RNA binding"/>
    <property type="evidence" value="ECO:0007669"/>
    <property type="project" value="UniProtKB-KW"/>
</dbReference>
<dbReference type="GO" id="GO:0016434">
    <property type="term" value="F:rRNA (cytosine) methyltransferase activity"/>
    <property type="evidence" value="ECO:0007669"/>
    <property type="project" value="UniProtKB-UniRule"/>
</dbReference>
<dbReference type="CDD" id="cd02440">
    <property type="entry name" value="AdoMet_MTases"/>
    <property type="match status" value="1"/>
</dbReference>
<dbReference type="CDD" id="cd21153">
    <property type="entry name" value="PUA_RlmI"/>
    <property type="match status" value="1"/>
</dbReference>
<dbReference type="CDD" id="cd11572">
    <property type="entry name" value="RlmI_M_like"/>
    <property type="match status" value="1"/>
</dbReference>
<dbReference type="FunFam" id="2.30.130.10:FF:000005">
    <property type="entry name" value="Ribosomal RNA large subunit methyltransferase I"/>
    <property type="match status" value="1"/>
</dbReference>
<dbReference type="FunFam" id="3.30.750.80:FF:000002">
    <property type="entry name" value="Ribosomal RNA large subunit methyltransferase I"/>
    <property type="match status" value="1"/>
</dbReference>
<dbReference type="FunFam" id="3.40.50.150:FF:000044">
    <property type="entry name" value="Ribosomal RNA large subunit methyltransferase I"/>
    <property type="match status" value="1"/>
</dbReference>
<dbReference type="Gene3D" id="2.30.130.10">
    <property type="entry name" value="PUA domain"/>
    <property type="match status" value="1"/>
</dbReference>
<dbReference type="Gene3D" id="3.30.750.80">
    <property type="entry name" value="RNA methyltransferase domain (HRMD) like"/>
    <property type="match status" value="1"/>
</dbReference>
<dbReference type="Gene3D" id="3.40.50.150">
    <property type="entry name" value="Vaccinia Virus protein VP39"/>
    <property type="match status" value="1"/>
</dbReference>
<dbReference type="HAMAP" id="MF_01857">
    <property type="entry name" value="23SrRNA_methyltr_I"/>
    <property type="match status" value="1"/>
</dbReference>
<dbReference type="InterPro" id="IPR002478">
    <property type="entry name" value="PUA"/>
</dbReference>
<dbReference type="InterPro" id="IPR015947">
    <property type="entry name" value="PUA-like_sf"/>
</dbReference>
<dbReference type="InterPro" id="IPR036974">
    <property type="entry name" value="PUA_sf"/>
</dbReference>
<dbReference type="InterPro" id="IPR023542">
    <property type="entry name" value="RLMI"/>
</dbReference>
<dbReference type="InterPro" id="IPR041532">
    <property type="entry name" value="RlmI-like_PUA"/>
</dbReference>
<dbReference type="InterPro" id="IPR019614">
    <property type="entry name" value="SAM-dep_methyl-trfase"/>
</dbReference>
<dbReference type="InterPro" id="IPR029063">
    <property type="entry name" value="SAM-dependent_MTases_sf"/>
</dbReference>
<dbReference type="NCBIfam" id="NF011707">
    <property type="entry name" value="PRK15128.1"/>
    <property type="match status" value="1"/>
</dbReference>
<dbReference type="PANTHER" id="PTHR42873">
    <property type="entry name" value="RIBOSOMAL RNA LARGE SUBUNIT METHYLTRANSFERASE"/>
    <property type="match status" value="1"/>
</dbReference>
<dbReference type="PANTHER" id="PTHR42873:SF1">
    <property type="entry name" value="S-ADENOSYLMETHIONINE-DEPENDENT METHYLTRANSFERASE DOMAIN-CONTAINING PROTEIN"/>
    <property type="match status" value="1"/>
</dbReference>
<dbReference type="Pfam" id="PF10672">
    <property type="entry name" value="Methyltrans_SAM"/>
    <property type="match status" value="1"/>
</dbReference>
<dbReference type="Pfam" id="PF17785">
    <property type="entry name" value="PUA_3"/>
    <property type="match status" value="1"/>
</dbReference>
<dbReference type="SMART" id="SM00359">
    <property type="entry name" value="PUA"/>
    <property type="match status" value="1"/>
</dbReference>
<dbReference type="SUPFAM" id="SSF88697">
    <property type="entry name" value="PUA domain-like"/>
    <property type="match status" value="1"/>
</dbReference>
<dbReference type="SUPFAM" id="SSF53335">
    <property type="entry name" value="S-adenosyl-L-methionine-dependent methyltransferases"/>
    <property type="match status" value="1"/>
</dbReference>
<dbReference type="PROSITE" id="PS50890">
    <property type="entry name" value="PUA"/>
    <property type="match status" value="1"/>
</dbReference>
<feature type="chain" id="PRO_0000366233" description="Ribosomal RNA large subunit methyltransferase I">
    <location>
        <begin position="1"/>
        <end position="396"/>
    </location>
</feature>
<feature type="domain" description="PUA" evidence="1">
    <location>
        <begin position="2"/>
        <end position="81"/>
    </location>
</feature>
<proteinExistence type="inferred from homology"/>
<sequence length="396" mass="44357">MSVRLVLAKGREKSLLRRHPWVFSGAVARMEGKASLGETIDIVDHQGKWLARGAYSPASQIRARVWTFDPSESIDIAFFSRRLQQAQKWRDWLAQKDGLDSYRLIAGESDGLPGITIDRFGNFLVLQLLSAGAEYQRAALISALQTLYPECSIYDRSDVAVRKKEGMELTQGPVTGELPPALLPIEEHGMKLLVDIQHGHKTGYYLDQRDSRLATRRYVENKRVLNCFSYTGGFAVSALMGGCSQVVSVDTSQEALDIARQNVELNKLDLSKAEFVRDDVFKLLRTYRDRGEKFDVIVMDPPKFVENKSQLMGACRGYKDINMLAIQLLNEGGILLTFSCSGLMTSDLFQKIIADAAIDAGRDVQFIEQFRQAADHPVIATYPEGLYLKGFACRVM</sequence>